<keyword id="KW-1185">Reference proteome</keyword>
<proteinExistence type="evidence at transcript level"/>
<organism>
    <name type="scientific">Xenopus laevis</name>
    <name type="common">African clawed frog</name>
    <dbReference type="NCBI Taxonomy" id="8355"/>
    <lineage>
        <taxon>Eukaryota</taxon>
        <taxon>Metazoa</taxon>
        <taxon>Chordata</taxon>
        <taxon>Craniata</taxon>
        <taxon>Vertebrata</taxon>
        <taxon>Euteleostomi</taxon>
        <taxon>Amphibia</taxon>
        <taxon>Batrachia</taxon>
        <taxon>Anura</taxon>
        <taxon>Pipoidea</taxon>
        <taxon>Pipidae</taxon>
        <taxon>Xenopodinae</taxon>
        <taxon>Xenopus</taxon>
        <taxon>Xenopus</taxon>
    </lineage>
</organism>
<name>K0930_XENLA</name>
<evidence type="ECO:0000256" key="1">
    <source>
        <dbReference type="SAM" id="MobiDB-lite"/>
    </source>
</evidence>
<evidence type="ECO:0000305" key="2"/>
<protein>
    <recommendedName>
        <fullName>Uncharacterized protein KIAA0930 homolog</fullName>
    </recommendedName>
</protein>
<feature type="chain" id="PRO_0000255941" description="Uncharacterized protein KIAA0930 homolog">
    <location>
        <begin position="1"/>
        <end position="399"/>
    </location>
</feature>
<feature type="region of interest" description="Disordered" evidence="1">
    <location>
        <begin position="254"/>
        <end position="335"/>
    </location>
</feature>
<feature type="compositionally biased region" description="Polar residues" evidence="1">
    <location>
        <begin position="255"/>
        <end position="264"/>
    </location>
</feature>
<feature type="compositionally biased region" description="Basic and acidic residues" evidence="1">
    <location>
        <begin position="310"/>
        <end position="329"/>
    </location>
</feature>
<dbReference type="EMBL" id="BC047259">
    <property type="protein sequence ID" value="AAH47259.1"/>
    <property type="status" value="ALT_INIT"/>
    <property type="molecule type" value="mRNA"/>
</dbReference>
<dbReference type="RefSeq" id="NP_001079690.1">
    <property type="nucleotide sequence ID" value="NM_001086221.1"/>
</dbReference>
<dbReference type="DNASU" id="379377"/>
<dbReference type="GeneID" id="379377"/>
<dbReference type="KEGG" id="xla:379377"/>
<dbReference type="AGR" id="Xenbase:XB-GENE-6078406"/>
<dbReference type="CTD" id="379377"/>
<dbReference type="Xenbase" id="XB-GENE-6078406">
    <property type="gene designation" value="KIAA0930.S"/>
</dbReference>
<dbReference type="OrthoDB" id="1906921at2759"/>
<dbReference type="Proteomes" id="UP000186698">
    <property type="component" value="Chromosome 3S"/>
</dbReference>
<dbReference type="Bgee" id="379377">
    <property type="expression patterns" value="Expressed in internal ear and 20 other cell types or tissues"/>
</dbReference>
<dbReference type="InterPro" id="IPR019141">
    <property type="entry name" value="DUF2045"/>
</dbReference>
<dbReference type="PANTHER" id="PTHR21477:SF13">
    <property type="entry name" value="KIAA0930"/>
    <property type="match status" value="1"/>
</dbReference>
<dbReference type="PANTHER" id="PTHR21477">
    <property type="entry name" value="ZGC:172139"/>
    <property type="match status" value="1"/>
</dbReference>
<dbReference type="Pfam" id="PF09741">
    <property type="entry name" value="DUF2045"/>
    <property type="match status" value="1"/>
</dbReference>
<comment type="sequence caution" evidence="2">
    <conflict type="erroneous initiation">
        <sequence resource="EMBL-CDS" id="AAH47259"/>
    </conflict>
</comment>
<reference key="1">
    <citation type="submission" date="2003-02" db="EMBL/GenBank/DDBJ databases">
        <authorList>
            <consortium name="NIH - Xenopus Gene Collection (XGC) project"/>
        </authorList>
    </citation>
    <scope>NUCLEOTIDE SEQUENCE [LARGE SCALE MRNA]</scope>
    <source>
        <tissue>Embryo</tissue>
    </source>
</reference>
<accession>Q801S4</accession>
<sequence length="399" mass="45761">MISAIVDERNRMNIRQEISGLGCFKDDRIVFWTWMYSTYFMEKWAPRQDDMLFYVRRKPAYMGPDGNEGRKQVEVEVYRKDSKKLPGLGDPDIDWEESVYLNLILQKLDYMVTCAVCTRSDAGDIHIHKKKSQQVFASPSKHPMDSKGEESKISYPNIFFMIDNFEEVFSDMTVGEGEMVCVELVARDKTNTFQGVIFQGSIRYEALKKVYDNRVSVAAKMAQKMSFGFYKYNNMEFVRMKGPQGKGHAEMAVSRVSTGDTSPYGTEEDSNPGSPMHERVTSFSTPPTPERNNRPSFFSPSLKRKVPRNRNAEMKKSHSANDSEEFFRDSDDDGDLHNVTNLRSRSLSGTGRSLVGSWLKLNRTEENALLYAHLTYVTLPLLRILSDILDVRQKPILMS</sequence>